<feature type="chain" id="PRO_1000079588" description="DNA replication and repair protein RecF">
    <location>
        <begin position="1"/>
        <end position="364"/>
    </location>
</feature>
<feature type="binding site" evidence="1">
    <location>
        <begin position="30"/>
        <end position="37"/>
    </location>
    <ligand>
        <name>ATP</name>
        <dbReference type="ChEBI" id="CHEBI:30616"/>
    </ligand>
</feature>
<protein>
    <recommendedName>
        <fullName evidence="1">DNA replication and repair protein RecF</fullName>
    </recommendedName>
</protein>
<proteinExistence type="inferred from homology"/>
<sequence>MKLNKIYLLSFRNLEKIELTPAHRFNIFYGKNAQGKTNLLESIFLLGTMKSFKMAKNSEMVRWGSDQSLIKGWVERDGVTREIALFIDKQGKKIKLDRKSVTKVDEFFGNLNVVVFTPEEINMVRGVPDLRRKYLDRAVFSSDVTYLHAYHDYCKILKNRNILLKSGEKSGLDVWTEKLAEYGRKVINKRLDYLHEIQELLSKFYNDISGTEEVVEIRYRPHLMDMENYEKDNCGALSEALVKCAAEEQRRGTTLVGPHRDDIDFVLNGRALKQFGSQGQQRSYVLALKMSEIDCLHQKFDSPPILLLDDMTSELDQDRNRNLMEFLKKKEMQVFITTTSLQNISLEGIENHRTFLVSEGKVLH</sequence>
<organism>
    <name type="scientific">Geotalea uraniireducens (strain Rf4)</name>
    <name type="common">Geobacter uraniireducens</name>
    <dbReference type="NCBI Taxonomy" id="351605"/>
    <lineage>
        <taxon>Bacteria</taxon>
        <taxon>Pseudomonadati</taxon>
        <taxon>Thermodesulfobacteriota</taxon>
        <taxon>Desulfuromonadia</taxon>
        <taxon>Geobacterales</taxon>
        <taxon>Geobacteraceae</taxon>
        <taxon>Geotalea</taxon>
    </lineage>
</organism>
<name>RECF_GEOUR</name>
<comment type="function">
    <text evidence="1">The RecF protein is involved in DNA metabolism; it is required for DNA replication and normal SOS inducibility. RecF binds preferentially to single-stranded, linear DNA. It also seems to bind ATP.</text>
</comment>
<comment type="subcellular location">
    <subcellularLocation>
        <location evidence="1">Cytoplasm</location>
    </subcellularLocation>
</comment>
<comment type="similarity">
    <text evidence="1">Belongs to the RecF family.</text>
</comment>
<reference key="1">
    <citation type="submission" date="2007-05" db="EMBL/GenBank/DDBJ databases">
        <title>Complete sequence of Geobacter uraniireducens Rf4.</title>
        <authorList>
            <consortium name="US DOE Joint Genome Institute"/>
            <person name="Copeland A."/>
            <person name="Lucas S."/>
            <person name="Lapidus A."/>
            <person name="Barry K."/>
            <person name="Detter J.C."/>
            <person name="Glavina del Rio T."/>
            <person name="Hammon N."/>
            <person name="Israni S."/>
            <person name="Dalin E."/>
            <person name="Tice H."/>
            <person name="Pitluck S."/>
            <person name="Chertkov O."/>
            <person name="Brettin T."/>
            <person name="Bruce D."/>
            <person name="Han C."/>
            <person name="Schmutz J."/>
            <person name="Larimer F."/>
            <person name="Land M."/>
            <person name="Hauser L."/>
            <person name="Kyrpides N."/>
            <person name="Mikhailova N."/>
            <person name="Shelobolina E."/>
            <person name="Aklujkar M."/>
            <person name="Lovley D."/>
            <person name="Richardson P."/>
        </authorList>
    </citation>
    <scope>NUCLEOTIDE SEQUENCE [LARGE SCALE GENOMIC DNA]</scope>
    <source>
        <strain>ATCC BAA-1134 / JCM 13001 / Rf4</strain>
    </source>
</reference>
<evidence type="ECO:0000255" key="1">
    <source>
        <dbReference type="HAMAP-Rule" id="MF_00365"/>
    </source>
</evidence>
<dbReference type="EMBL" id="CP000698">
    <property type="protein sequence ID" value="ABQ24221.1"/>
    <property type="molecule type" value="Genomic_DNA"/>
</dbReference>
<dbReference type="RefSeq" id="WP_011936950.1">
    <property type="nucleotide sequence ID" value="NC_009483.1"/>
</dbReference>
<dbReference type="SMR" id="A5GDX3"/>
<dbReference type="STRING" id="351605.Gura_0003"/>
<dbReference type="KEGG" id="gur:Gura_0003"/>
<dbReference type="HOGENOM" id="CLU_040267_0_1_7"/>
<dbReference type="OrthoDB" id="9803889at2"/>
<dbReference type="Proteomes" id="UP000006695">
    <property type="component" value="Chromosome"/>
</dbReference>
<dbReference type="GO" id="GO:0005737">
    <property type="term" value="C:cytoplasm"/>
    <property type="evidence" value="ECO:0007669"/>
    <property type="project" value="UniProtKB-SubCell"/>
</dbReference>
<dbReference type="GO" id="GO:0005524">
    <property type="term" value="F:ATP binding"/>
    <property type="evidence" value="ECO:0007669"/>
    <property type="project" value="UniProtKB-UniRule"/>
</dbReference>
<dbReference type="GO" id="GO:0003697">
    <property type="term" value="F:single-stranded DNA binding"/>
    <property type="evidence" value="ECO:0007669"/>
    <property type="project" value="UniProtKB-UniRule"/>
</dbReference>
<dbReference type="GO" id="GO:0006260">
    <property type="term" value="P:DNA replication"/>
    <property type="evidence" value="ECO:0007669"/>
    <property type="project" value="UniProtKB-UniRule"/>
</dbReference>
<dbReference type="GO" id="GO:0000731">
    <property type="term" value="P:DNA synthesis involved in DNA repair"/>
    <property type="evidence" value="ECO:0007669"/>
    <property type="project" value="TreeGrafter"/>
</dbReference>
<dbReference type="GO" id="GO:0006302">
    <property type="term" value="P:double-strand break repair"/>
    <property type="evidence" value="ECO:0007669"/>
    <property type="project" value="TreeGrafter"/>
</dbReference>
<dbReference type="GO" id="GO:0009432">
    <property type="term" value="P:SOS response"/>
    <property type="evidence" value="ECO:0007669"/>
    <property type="project" value="UniProtKB-UniRule"/>
</dbReference>
<dbReference type="Gene3D" id="3.40.50.300">
    <property type="entry name" value="P-loop containing nucleotide triphosphate hydrolases"/>
    <property type="match status" value="1"/>
</dbReference>
<dbReference type="Gene3D" id="1.20.1050.90">
    <property type="entry name" value="RecF/RecN/SMC, N-terminal domain"/>
    <property type="match status" value="1"/>
</dbReference>
<dbReference type="HAMAP" id="MF_00365">
    <property type="entry name" value="RecF"/>
    <property type="match status" value="1"/>
</dbReference>
<dbReference type="InterPro" id="IPR001238">
    <property type="entry name" value="DNA-binding_RecF"/>
</dbReference>
<dbReference type="InterPro" id="IPR027417">
    <property type="entry name" value="P-loop_NTPase"/>
</dbReference>
<dbReference type="InterPro" id="IPR003395">
    <property type="entry name" value="RecF/RecN/SMC_N"/>
</dbReference>
<dbReference type="InterPro" id="IPR042174">
    <property type="entry name" value="RecF_2"/>
</dbReference>
<dbReference type="NCBIfam" id="TIGR00611">
    <property type="entry name" value="recf"/>
    <property type="match status" value="1"/>
</dbReference>
<dbReference type="PANTHER" id="PTHR32182">
    <property type="entry name" value="DNA REPLICATION AND REPAIR PROTEIN RECF"/>
    <property type="match status" value="1"/>
</dbReference>
<dbReference type="PANTHER" id="PTHR32182:SF0">
    <property type="entry name" value="DNA REPLICATION AND REPAIR PROTEIN RECF"/>
    <property type="match status" value="1"/>
</dbReference>
<dbReference type="Pfam" id="PF02463">
    <property type="entry name" value="SMC_N"/>
    <property type="match status" value="1"/>
</dbReference>
<dbReference type="SUPFAM" id="SSF52540">
    <property type="entry name" value="P-loop containing nucleoside triphosphate hydrolases"/>
    <property type="match status" value="1"/>
</dbReference>
<keyword id="KW-0067">ATP-binding</keyword>
<keyword id="KW-0963">Cytoplasm</keyword>
<keyword id="KW-0227">DNA damage</keyword>
<keyword id="KW-0234">DNA repair</keyword>
<keyword id="KW-0235">DNA replication</keyword>
<keyword id="KW-0238">DNA-binding</keyword>
<keyword id="KW-0547">Nucleotide-binding</keyword>
<keyword id="KW-1185">Reference proteome</keyword>
<keyword id="KW-0742">SOS response</keyword>
<gene>
    <name evidence="1" type="primary">recF</name>
    <name type="ordered locus">Gura_0003</name>
</gene>
<accession>A5GDX3</accession>